<dbReference type="EC" id="2.7.1.24" evidence="1 2"/>
<dbReference type="EMBL" id="M33159">
    <property type="protein sequence ID" value="AAA27493.1"/>
    <property type="molecule type" value="Genomic_DNA"/>
</dbReference>
<dbReference type="EMBL" id="AP008226">
    <property type="protein sequence ID" value="BAD70749.1"/>
    <property type="molecule type" value="Genomic_DNA"/>
</dbReference>
<dbReference type="PIR" id="S27735">
    <property type="entry name" value="S27735"/>
</dbReference>
<dbReference type="RefSeq" id="WP_011173002.1">
    <property type="nucleotide sequence ID" value="NC_006461.1"/>
</dbReference>
<dbReference type="RefSeq" id="YP_144192.1">
    <property type="nucleotide sequence ID" value="NC_006461.1"/>
</dbReference>
<dbReference type="PDB" id="1UF9">
    <property type="method" value="X-ray"/>
    <property type="resolution" value="2.80 A"/>
    <property type="chains" value="A/B/C=1-198"/>
</dbReference>
<dbReference type="PDBsum" id="1UF9"/>
<dbReference type="SMR" id="Q56416"/>
<dbReference type="EnsemblBacteria" id="BAD70749">
    <property type="protein sequence ID" value="BAD70749"/>
    <property type="gene ID" value="BAD70749"/>
</dbReference>
<dbReference type="GeneID" id="3169510"/>
<dbReference type="KEGG" id="ttj:TTHA0926"/>
<dbReference type="PATRIC" id="fig|300852.9.peg.909"/>
<dbReference type="eggNOG" id="COG0237">
    <property type="taxonomic scope" value="Bacteria"/>
</dbReference>
<dbReference type="HOGENOM" id="CLU_057180_1_1_0"/>
<dbReference type="PhylomeDB" id="Q56416"/>
<dbReference type="UniPathway" id="UPA00241">
    <property type="reaction ID" value="UER00356"/>
</dbReference>
<dbReference type="EvolutionaryTrace" id="Q56416"/>
<dbReference type="Proteomes" id="UP000000532">
    <property type="component" value="Chromosome"/>
</dbReference>
<dbReference type="GO" id="GO:0005737">
    <property type="term" value="C:cytoplasm"/>
    <property type="evidence" value="ECO:0007669"/>
    <property type="project" value="UniProtKB-SubCell"/>
</dbReference>
<dbReference type="GO" id="GO:0005524">
    <property type="term" value="F:ATP binding"/>
    <property type="evidence" value="ECO:0007669"/>
    <property type="project" value="UniProtKB-UniRule"/>
</dbReference>
<dbReference type="GO" id="GO:0004140">
    <property type="term" value="F:dephospho-CoA kinase activity"/>
    <property type="evidence" value="ECO:0007669"/>
    <property type="project" value="UniProtKB-UniRule"/>
</dbReference>
<dbReference type="GO" id="GO:0015937">
    <property type="term" value="P:coenzyme A biosynthetic process"/>
    <property type="evidence" value="ECO:0007669"/>
    <property type="project" value="UniProtKB-UniRule"/>
</dbReference>
<dbReference type="CDD" id="cd02022">
    <property type="entry name" value="DPCK"/>
    <property type="match status" value="1"/>
</dbReference>
<dbReference type="Gene3D" id="3.40.50.300">
    <property type="entry name" value="P-loop containing nucleotide triphosphate hydrolases"/>
    <property type="match status" value="1"/>
</dbReference>
<dbReference type="HAMAP" id="MF_00376">
    <property type="entry name" value="Dephospho_CoA_kinase"/>
    <property type="match status" value="1"/>
</dbReference>
<dbReference type="InterPro" id="IPR001977">
    <property type="entry name" value="Depp_CoAkinase"/>
</dbReference>
<dbReference type="InterPro" id="IPR027417">
    <property type="entry name" value="P-loop_NTPase"/>
</dbReference>
<dbReference type="NCBIfam" id="TIGR00152">
    <property type="entry name" value="dephospho-CoA kinase"/>
    <property type="match status" value="1"/>
</dbReference>
<dbReference type="PANTHER" id="PTHR10695:SF46">
    <property type="entry name" value="BIFUNCTIONAL COENZYME A SYNTHASE-RELATED"/>
    <property type="match status" value="1"/>
</dbReference>
<dbReference type="PANTHER" id="PTHR10695">
    <property type="entry name" value="DEPHOSPHO-COA KINASE-RELATED"/>
    <property type="match status" value="1"/>
</dbReference>
<dbReference type="Pfam" id="PF01121">
    <property type="entry name" value="CoaE"/>
    <property type="match status" value="1"/>
</dbReference>
<dbReference type="SUPFAM" id="SSF52540">
    <property type="entry name" value="P-loop containing nucleoside triphosphate hydrolases"/>
    <property type="match status" value="1"/>
</dbReference>
<dbReference type="PROSITE" id="PS51219">
    <property type="entry name" value="DPCK"/>
    <property type="match status" value="1"/>
</dbReference>
<accession>Q56416</accession>
<accession>Q5SJT2</accession>
<keyword id="KW-0002">3D-structure</keyword>
<keyword id="KW-0067">ATP-binding</keyword>
<keyword id="KW-0173">Coenzyme A biosynthesis</keyword>
<keyword id="KW-0963">Cytoplasm</keyword>
<keyword id="KW-0418">Kinase</keyword>
<keyword id="KW-0547">Nucleotide-binding</keyword>
<keyword id="KW-1185">Reference proteome</keyword>
<keyword id="KW-0808">Transferase</keyword>
<reference key="1">
    <citation type="journal article" date="1990" name="Plasmid">
        <title>Cloning and sequence of IS1000, a putative insertion sequence from Thermus thermophilus HB8.</title>
        <authorList>
            <person name="Ashby M.K."/>
            <person name="Bergquist P.L."/>
        </authorList>
    </citation>
    <scope>NUCLEOTIDE SEQUENCE [GENOMIC DNA]</scope>
</reference>
<reference key="2">
    <citation type="submission" date="2004-11" db="EMBL/GenBank/DDBJ databases">
        <title>Complete genome sequence of Thermus thermophilus HB8.</title>
        <authorList>
            <person name="Masui R."/>
            <person name="Kurokawa K."/>
            <person name="Nakagawa N."/>
            <person name="Tokunaga F."/>
            <person name="Koyama Y."/>
            <person name="Shibata T."/>
            <person name="Oshima T."/>
            <person name="Yokoyama S."/>
            <person name="Yasunaga T."/>
            <person name="Kuramitsu S."/>
        </authorList>
    </citation>
    <scope>NUCLEOTIDE SEQUENCE [LARGE SCALE GENOMIC DNA]</scope>
    <source>
        <strain>ATCC 27634 / DSM 579 / HB8</strain>
    </source>
</reference>
<reference evidence="5" key="3">
    <citation type="journal article" date="2005" name="Proteins">
        <title>ATP-induced structural change of dephosphocoenzyme A kinase from Thermus thermophilus HB8.</title>
        <authorList>
            <person name="Seto A."/>
            <person name="Murayama K."/>
            <person name="Toyama M."/>
            <person name="Ebihara A."/>
            <person name="Nakagawa N."/>
            <person name="Kuramitsu S."/>
            <person name="Shirouzu M."/>
            <person name="Yokoyama S."/>
        </authorList>
    </citation>
    <scope>X-RAY CRYSTALLOGRAPHY (2.80 ANGSTROMS) IN COMPLEX WITH ATP</scope>
    <scope>FUNCTION</scope>
    <scope>CATALYTIC ACTIVITY</scope>
    <source>
        <strain>ATCC 27634 / DSM 579 / HB8</strain>
    </source>
</reference>
<name>COAE_THET8</name>
<evidence type="ECO:0000255" key="1">
    <source>
        <dbReference type="HAMAP-Rule" id="MF_00376"/>
    </source>
</evidence>
<evidence type="ECO:0000269" key="2">
    <source>
    </source>
</evidence>
<evidence type="ECO:0000303" key="3">
    <source>
    </source>
</evidence>
<evidence type="ECO:0000305" key="4"/>
<evidence type="ECO:0007744" key="5">
    <source>
        <dbReference type="PDB" id="1UF9"/>
    </source>
</evidence>
<evidence type="ECO:0007829" key="6">
    <source>
        <dbReference type="PDB" id="1UF9"/>
    </source>
</evidence>
<comment type="function">
    <text evidence="1 2">Catalyzes the phosphorylation of the 3'-hydroxyl group of dephosphocoenzyme A to form coenzyme A.</text>
</comment>
<comment type="catalytic activity">
    <reaction evidence="1 2">
        <text>3'-dephospho-CoA + ATP = ADP + CoA + H(+)</text>
        <dbReference type="Rhea" id="RHEA:18245"/>
        <dbReference type="ChEBI" id="CHEBI:15378"/>
        <dbReference type="ChEBI" id="CHEBI:30616"/>
        <dbReference type="ChEBI" id="CHEBI:57287"/>
        <dbReference type="ChEBI" id="CHEBI:57328"/>
        <dbReference type="ChEBI" id="CHEBI:456216"/>
        <dbReference type="EC" id="2.7.1.24"/>
    </reaction>
</comment>
<comment type="pathway">
    <text evidence="1">Cofactor biosynthesis; coenzyme A biosynthesis; CoA from (R)-pantothenate: step 5/5.</text>
</comment>
<comment type="subcellular location">
    <subcellularLocation>
        <location evidence="1">Cytoplasm</location>
    </subcellularLocation>
</comment>
<comment type="similarity">
    <text evidence="1 4">Belongs to the CoaE family.</text>
</comment>
<protein>
    <recommendedName>
        <fullName evidence="1">Dephospho-CoA kinase</fullName>
        <ecNumber evidence="1 2">2.7.1.24</ecNumber>
    </recommendedName>
    <alternativeName>
        <fullName evidence="1 3">Dephosphocoenzyme A kinase</fullName>
        <shortName evidence="3">DCK</shortName>
    </alternativeName>
</protein>
<sequence>MGHEAKHPIIIGITGNIGSGKSTVAALLRSWGYPVLDLDALAARARENKEEELKRLFPEAVVGGRLDRRALARLVFSDPERLKALEAVVHPEVRRLLMEELSRLEAPLVFLEIPLLFEKGWEGRLHGTLLVAAPLEERVRRVMARSGLSREEVLARERAQMPEEEKRKRATWVLENTGSLEDLERALKAVLAELTGGAKGGRG</sequence>
<gene>
    <name evidence="1" type="primary">coaE</name>
    <name type="ordered locus">TTHA0926</name>
</gene>
<proteinExistence type="evidence at protein level"/>
<feature type="chain" id="PRO_0000173023" description="Dephospho-CoA kinase">
    <location>
        <begin position="1"/>
        <end position="203"/>
    </location>
</feature>
<feature type="domain" description="DPCK" evidence="1">
    <location>
        <begin position="10"/>
        <end position="203"/>
    </location>
</feature>
<feature type="binding site" evidence="2 5">
    <location>
        <begin position="16"/>
        <end position="23"/>
    </location>
    <ligand>
        <name>ATP</name>
        <dbReference type="ChEBI" id="CHEBI:30616"/>
    </ligand>
</feature>
<feature type="binding site" evidence="2 5">
    <location>
        <position position="145"/>
    </location>
    <ligand>
        <name>ATP</name>
        <dbReference type="ChEBI" id="CHEBI:30616"/>
    </ligand>
</feature>
<feature type="binding site" evidence="2 5">
    <location>
        <position position="176"/>
    </location>
    <ligand>
        <name>ATP</name>
        <dbReference type="ChEBI" id="CHEBI:30616"/>
    </ligand>
</feature>
<feature type="sequence conflict" description="In Ref. 1." evidence="4" ref="1">
    <original>DLERALKAVLAELTGGAKGGRG</original>
    <variation>AWKGP</variation>
    <location>
        <begin position="182"/>
        <end position="203"/>
    </location>
</feature>
<feature type="strand" evidence="6">
    <location>
        <begin position="9"/>
        <end position="15"/>
    </location>
</feature>
<feature type="helix" evidence="6">
    <location>
        <begin position="21"/>
        <end position="30"/>
    </location>
</feature>
<feature type="strand" evidence="6">
    <location>
        <begin position="35"/>
        <end position="37"/>
    </location>
</feature>
<feature type="helix" evidence="6">
    <location>
        <begin position="38"/>
        <end position="48"/>
    </location>
</feature>
<feature type="helix" evidence="6">
    <location>
        <begin position="50"/>
        <end position="56"/>
    </location>
</feature>
<feature type="helix" evidence="6">
    <location>
        <begin position="58"/>
        <end position="60"/>
    </location>
</feature>
<feature type="helix" evidence="6">
    <location>
        <begin position="68"/>
        <end position="75"/>
    </location>
</feature>
<feature type="helix" evidence="6">
    <location>
        <begin position="79"/>
        <end position="102"/>
    </location>
</feature>
<feature type="strand" evidence="6">
    <location>
        <begin position="107"/>
        <end position="112"/>
    </location>
</feature>
<feature type="turn" evidence="6">
    <location>
        <begin position="114"/>
        <end position="120"/>
    </location>
</feature>
<feature type="helix" evidence="6">
    <location>
        <begin position="122"/>
        <end position="124"/>
    </location>
</feature>
<feature type="strand" evidence="6">
    <location>
        <begin position="125"/>
        <end position="131"/>
    </location>
</feature>
<feature type="helix" evidence="6">
    <location>
        <begin position="135"/>
        <end position="143"/>
    </location>
</feature>
<feature type="helix" evidence="6">
    <location>
        <begin position="151"/>
        <end position="157"/>
    </location>
</feature>
<feature type="helix" evidence="6">
    <location>
        <begin position="163"/>
        <end position="169"/>
    </location>
</feature>
<feature type="strand" evidence="6">
    <location>
        <begin position="171"/>
        <end position="174"/>
    </location>
</feature>
<feature type="helix" evidence="6">
    <location>
        <begin position="179"/>
        <end position="192"/>
    </location>
</feature>
<organism>
    <name type="scientific">Thermus thermophilus (strain ATCC 27634 / DSM 579 / HB8)</name>
    <dbReference type="NCBI Taxonomy" id="300852"/>
    <lineage>
        <taxon>Bacteria</taxon>
        <taxon>Thermotogati</taxon>
        <taxon>Deinococcota</taxon>
        <taxon>Deinococci</taxon>
        <taxon>Thermales</taxon>
        <taxon>Thermaceae</taxon>
        <taxon>Thermus</taxon>
    </lineage>
</organism>